<sequence>MVAFSAILQTALGLSAANDLTSLFGPYLSPQAEILYGNDTNFYAQLQQRWTDYKAPSYGAGAIKPATAKDVQNVVKIANANSIPFFVTGGGHGISDYHNFDGLSIDMGKFNTVERNAAGDRLTIGGAVKIHQLTKPLAEWGKELPLGSCACVGVVGATLGGGIGSLHGLRGLLVDYLEEVEVVTASGDLIKASETEHKDLFWALRGAGSNYGIVTSATYRLPEVTNKGVYVNADYVYPVSANQSFFEVLEQFDNTLPPRLAITGASFFDRVNNKPVIAVNAVFFGPLEEALPHLQPFESLQPEMKNVSSIPAEQMMDAAFFSFFGMDNGACTPNQHINIYTVALRQIHAPTFQSFYSKLVDFWNANPTYQGRLLIQRYSNEGPMAVPDDATAYAYRDVKTYMNIEGFYADSALDDAVNEFATLGRQEFVETSGFDQLAVYSNYARGDEGPVAWYGERKLPKLSALKRKWDPEQRFSVNNPVPLHWRTEL</sequence>
<organism>
    <name type="scientific">Aspergillus terreus (strain NIH 2624 / FGSC A1156)</name>
    <dbReference type="NCBI Taxonomy" id="341663"/>
    <lineage>
        <taxon>Eukaryota</taxon>
        <taxon>Fungi</taxon>
        <taxon>Dikarya</taxon>
        <taxon>Ascomycota</taxon>
        <taxon>Pezizomycotina</taxon>
        <taxon>Eurotiomycetes</taxon>
        <taxon>Eurotiomycetidae</taxon>
        <taxon>Eurotiales</taxon>
        <taxon>Aspergillaceae</taxon>
        <taxon>Aspergillus</taxon>
        <taxon>Aspergillus subgen. Circumdati</taxon>
    </lineage>
</organism>
<name>TAZG_ASPTN</name>
<protein>
    <recommendedName>
        <fullName evidence="6">FAD-linked oxidoreductase tazG</fullName>
        <ecNumber evidence="8">1.-.-.-</ecNumber>
    </recommendedName>
    <alternativeName>
        <fullName evidence="6">Azaphilone biosynthesis cluster protein G</fullName>
    </alternativeName>
</protein>
<comment type="function">
    <text evidence="5 8">FAD-linked oxidoreductase; part of the gene cluster that mediates the biosynthesis of azaterrilone A and other azaphilones, a class of fungal metabolites characterized by a highly oxygenated pyrano-quinone bicyclic core and exhibiting a broad range of bioactivities (PubMed:35398258). The first step of the pathway begins with the non-reducing polyketide synthase tazA that assembles one acetyl-CoA starter unit, five malonyl-CoA units, and catalyzes a series of Claisen condensations, methylation, PT-mediated cyclization, and finally releases the first hexaketide precursor through the R-domain. The tazA product then undergoes reduction on its terminal ketone and the following pyran-ring formation by yet undetermined enzyme(s). Dehydration and enoyl reduction, possibly involving the trans-enoyl reductase tazE leads to the next intermediate. TazD is predicted as an acetyltransferase and might catalyze the acetylation steps leading to the synthesis of azaterrilone A. Azaterrilone A is not the final product of the taz pathway and both the highly reducing polyketide synthase tazB and the dual enzyme tazHJ catalyze late steps of the pathway, leading to the production of the 2 final stereoisomers that contain additional polyketide modification whose structures have still to be determined (Probable).</text>
</comment>
<comment type="cofactor">
    <cofactor evidence="1">
        <name>FAD</name>
        <dbReference type="ChEBI" id="CHEBI:57692"/>
    </cofactor>
</comment>
<comment type="pathway">
    <text evidence="8">Secondary metabolite biosynthesis.</text>
</comment>
<comment type="induction">
    <text evidence="5">Expression is positively regulated by the azaterrilone A cluster-specific transcription factor tazR.</text>
</comment>
<comment type="similarity">
    <text evidence="7">Belongs to the oxygen-dependent FAD-linked oxidoreductase family.</text>
</comment>
<proteinExistence type="evidence at transcript level"/>
<reference key="1">
    <citation type="submission" date="2005-09" db="EMBL/GenBank/DDBJ databases">
        <title>Annotation of the Aspergillus terreus NIH2624 genome.</title>
        <authorList>
            <person name="Birren B.W."/>
            <person name="Lander E.S."/>
            <person name="Galagan J.E."/>
            <person name="Nusbaum C."/>
            <person name="Devon K."/>
            <person name="Henn M."/>
            <person name="Ma L.-J."/>
            <person name="Jaffe D.B."/>
            <person name="Butler J."/>
            <person name="Alvarez P."/>
            <person name="Gnerre S."/>
            <person name="Grabherr M."/>
            <person name="Kleber M."/>
            <person name="Mauceli E.W."/>
            <person name="Brockman W."/>
            <person name="Rounsley S."/>
            <person name="Young S.K."/>
            <person name="LaButti K."/>
            <person name="Pushparaj V."/>
            <person name="DeCaprio D."/>
            <person name="Crawford M."/>
            <person name="Koehrsen M."/>
            <person name="Engels R."/>
            <person name="Montgomery P."/>
            <person name="Pearson M."/>
            <person name="Howarth C."/>
            <person name="Larson L."/>
            <person name="Luoma S."/>
            <person name="White J."/>
            <person name="Alvarado L."/>
            <person name="Kodira C.D."/>
            <person name="Zeng Q."/>
            <person name="Oleary S."/>
            <person name="Yandava C."/>
            <person name="Denning D.W."/>
            <person name="Nierman W.C."/>
            <person name="Milne T."/>
            <person name="Madden K."/>
        </authorList>
    </citation>
    <scope>NUCLEOTIDE SEQUENCE [LARGE SCALE GENOMIC DNA]</scope>
    <source>
        <strain>NIH 2624 / FGSC A1156</strain>
    </source>
</reference>
<reference key="2">
    <citation type="journal article" date="2022" name="Fungal Genet. Biol.">
        <title>Characterization of a silent azaphilone biosynthesis gene cluster in Aspergillus terreus NIH 2624.</title>
        <authorList>
            <person name="Sun W.W."/>
            <person name="Li C.Y."/>
            <person name="Chiang Y.M."/>
            <person name="Lin T.S."/>
            <person name="Warren S."/>
            <person name="Chang F.R."/>
            <person name="Wang C.C.C."/>
        </authorList>
    </citation>
    <scope>FUNCTION</scope>
    <scope>INDUCTION</scope>
    <scope>PATHWAY</scope>
</reference>
<accession>Q0CSA1</accession>
<gene>
    <name evidence="6" type="primary">tazG</name>
    <name type="ORF">ATEG_03433</name>
</gene>
<keyword id="KW-0274">FAD</keyword>
<keyword id="KW-0285">Flavoprotein</keyword>
<keyword id="KW-0325">Glycoprotein</keyword>
<keyword id="KW-0560">Oxidoreductase</keyword>
<keyword id="KW-1185">Reference proteome</keyword>
<keyword id="KW-0732">Signal</keyword>
<evidence type="ECO:0000250" key="1">
    <source>
        <dbReference type="UniProtKB" id="Q5BEJ5"/>
    </source>
</evidence>
<evidence type="ECO:0000255" key="2"/>
<evidence type="ECO:0000255" key="3">
    <source>
        <dbReference type="PROSITE-ProRule" id="PRU00498"/>
    </source>
</evidence>
<evidence type="ECO:0000255" key="4">
    <source>
        <dbReference type="PROSITE-ProRule" id="PRU00718"/>
    </source>
</evidence>
<evidence type="ECO:0000269" key="5">
    <source>
    </source>
</evidence>
<evidence type="ECO:0000303" key="6">
    <source>
    </source>
</evidence>
<evidence type="ECO:0000305" key="7"/>
<evidence type="ECO:0000305" key="8">
    <source>
    </source>
</evidence>
<dbReference type="EC" id="1.-.-.-" evidence="8"/>
<dbReference type="EMBL" id="CH476597">
    <property type="protein sequence ID" value="EAU36707.1"/>
    <property type="molecule type" value="Genomic_DNA"/>
</dbReference>
<dbReference type="RefSeq" id="XP_001212611.1">
    <property type="nucleotide sequence ID" value="XM_001212611.1"/>
</dbReference>
<dbReference type="SMR" id="Q0CSA1"/>
<dbReference type="STRING" id="341663.Q0CSA1"/>
<dbReference type="GlyCosmos" id="Q0CSA1">
    <property type="glycosylation" value="3 sites, No reported glycans"/>
</dbReference>
<dbReference type="EnsemblFungi" id="EAU36707">
    <property type="protein sequence ID" value="EAU36707"/>
    <property type="gene ID" value="ATEG_03433"/>
</dbReference>
<dbReference type="GeneID" id="4318028"/>
<dbReference type="VEuPathDB" id="FungiDB:ATEG_03433"/>
<dbReference type="eggNOG" id="ENOG502SJ3M">
    <property type="taxonomic scope" value="Eukaryota"/>
</dbReference>
<dbReference type="HOGENOM" id="CLU_018354_0_0_1"/>
<dbReference type="OMA" id="MNIEGFY"/>
<dbReference type="OrthoDB" id="415825at2759"/>
<dbReference type="Proteomes" id="UP000007963">
    <property type="component" value="Unassembled WGS sequence"/>
</dbReference>
<dbReference type="GO" id="GO:0071949">
    <property type="term" value="F:FAD binding"/>
    <property type="evidence" value="ECO:0007669"/>
    <property type="project" value="InterPro"/>
</dbReference>
<dbReference type="GO" id="GO:0016491">
    <property type="term" value="F:oxidoreductase activity"/>
    <property type="evidence" value="ECO:0007669"/>
    <property type="project" value="UniProtKB-KW"/>
</dbReference>
<dbReference type="Gene3D" id="3.30.465.10">
    <property type="match status" value="1"/>
</dbReference>
<dbReference type="Gene3D" id="3.40.462.20">
    <property type="match status" value="1"/>
</dbReference>
<dbReference type="InterPro" id="IPR012951">
    <property type="entry name" value="BBE"/>
</dbReference>
<dbReference type="InterPro" id="IPR016166">
    <property type="entry name" value="FAD-bd_PCMH"/>
</dbReference>
<dbReference type="InterPro" id="IPR036318">
    <property type="entry name" value="FAD-bd_PCMH-like_sf"/>
</dbReference>
<dbReference type="InterPro" id="IPR016169">
    <property type="entry name" value="FAD-bd_PCMH_sub2"/>
</dbReference>
<dbReference type="InterPro" id="IPR050416">
    <property type="entry name" value="FAD-linked_Oxidoreductase"/>
</dbReference>
<dbReference type="InterPro" id="IPR006094">
    <property type="entry name" value="Oxid_FAD_bind_N"/>
</dbReference>
<dbReference type="PANTHER" id="PTHR42973">
    <property type="entry name" value="BINDING OXIDOREDUCTASE, PUTATIVE (AFU_ORTHOLOGUE AFUA_1G17690)-RELATED"/>
    <property type="match status" value="1"/>
</dbReference>
<dbReference type="PANTHER" id="PTHR42973:SF32">
    <property type="entry name" value="FAD-LINKED OXIDOREDUCTASE AFOF"/>
    <property type="match status" value="1"/>
</dbReference>
<dbReference type="Pfam" id="PF08031">
    <property type="entry name" value="BBE"/>
    <property type="match status" value="1"/>
</dbReference>
<dbReference type="Pfam" id="PF01565">
    <property type="entry name" value="FAD_binding_4"/>
    <property type="match status" value="1"/>
</dbReference>
<dbReference type="SUPFAM" id="SSF56176">
    <property type="entry name" value="FAD-binding/transporter-associated domain-like"/>
    <property type="match status" value="1"/>
</dbReference>
<dbReference type="PROSITE" id="PS51387">
    <property type="entry name" value="FAD_PCMH"/>
    <property type="match status" value="1"/>
</dbReference>
<feature type="signal peptide" evidence="2">
    <location>
        <begin position="1"/>
        <end position="17"/>
    </location>
</feature>
<feature type="chain" id="PRO_5004170556" description="FAD-linked oxidoreductase tazG">
    <location>
        <begin position="18"/>
        <end position="489"/>
    </location>
</feature>
<feature type="domain" description="FAD-binding PCMH-type" evidence="4">
    <location>
        <begin position="55"/>
        <end position="224"/>
    </location>
</feature>
<feature type="glycosylation site" description="N-linked (GlcNAc...) asparagine" evidence="3">
    <location>
        <position position="38"/>
    </location>
</feature>
<feature type="glycosylation site" description="N-linked (GlcNAc...) asparagine" evidence="3">
    <location>
        <position position="242"/>
    </location>
</feature>
<feature type="glycosylation site" description="N-linked (GlcNAc...) asparagine" evidence="3">
    <location>
        <position position="306"/>
    </location>
</feature>